<sequence length="143" mass="16495">MSFLFFLVVLISIGLWVGPCVADNPENRCIKQFAKTNPACIVHCKYNLYKFTDDNYDITDQHINKFTDVLIKNKAVDGSKKSQVQEHLKKCAEESLKKTHGKNCQRLVEYYSCAVDNKLIDYFKYESAINSYDRSIYTPPYSG</sequence>
<accession>L0MZ37</accession>
<accession>L0MXR4</accession>
<accession>L0MYF4</accession>
<accession>L0MZS7</accession>
<comment type="function">
    <text evidence="3">Inhibits the intrinsic blood coagulation pathway in the host by blocking activation of host coagulation factor XII (F12).</text>
</comment>
<comment type="subunit">
    <text evidence="3">Interacts with human F12 (inactive).</text>
</comment>
<comment type="subcellular location">
    <subcellularLocation>
        <location evidence="5">Secreted</location>
    </subcellularLocation>
</comment>
<comment type="tissue specificity">
    <text evidence="2 3">Salivary gland.</text>
</comment>
<dbReference type="EMBL" id="AK416775">
    <property type="protein sequence ID" value="BAM69116.1"/>
    <property type="molecule type" value="mRNA"/>
</dbReference>
<dbReference type="EMBL" id="AK416778">
    <property type="protein sequence ID" value="BAM69119.1"/>
    <property type="molecule type" value="mRNA"/>
</dbReference>
<dbReference type="EMBL" id="AK416774">
    <property type="protein sequence ID" value="BAM69115.1"/>
    <property type="molecule type" value="mRNA"/>
</dbReference>
<dbReference type="EMBL" id="AK416776">
    <property type="protein sequence ID" value="BAM69117.1"/>
    <property type="molecule type" value="mRNA"/>
</dbReference>
<dbReference type="EMBL" id="AK416777">
    <property type="protein sequence ID" value="BAM69118.1"/>
    <property type="molecule type" value="mRNA"/>
</dbReference>
<dbReference type="GO" id="GO:0005576">
    <property type="term" value="C:extracellular region"/>
    <property type="evidence" value="ECO:0007669"/>
    <property type="project" value="UniProtKB-SubCell"/>
</dbReference>
<dbReference type="GO" id="GO:0005549">
    <property type="term" value="F:odorant binding"/>
    <property type="evidence" value="ECO:0007669"/>
    <property type="project" value="InterPro"/>
</dbReference>
<dbReference type="GO" id="GO:0090729">
    <property type="term" value="F:toxin activity"/>
    <property type="evidence" value="ECO:0000314"/>
    <property type="project" value="UniProtKB"/>
</dbReference>
<dbReference type="GO" id="GO:0035899">
    <property type="term" value="P:suppression of blood coagulation in another organism"/>
    <property type="evidence" value="ECO:0000314"/>
    <property type="project" value="UniProtKB"/>
</dbReference>
<dbReference type="Gene3D" id="1.10.238.20">
    <property type="entry name" value="Pheromone/general odorant binding protein domain"/>
    <property type="match status" value="1"/>
</dbReference>
<dbReference type="InterPro" id="IPR036728">
    <property type="entry name" value="PBP_GOBP_sf"/>
</dbReference>
<dbReference type="SUPFAM" id="SSF47565">
    <property type="entry name" value="Insect pheromone/odorant-binding proteins"/>
    <property type="match status" value="1"/>
</dbReference>
<name>SP15_LUTAY</name>
<proteinExistence type="evidence at protein level"/>
<evidence type="ECO:0000255" key="1"/>
<evidence type="ECO:0000269" key="2">
    <source>
    </source>
</evidence>
<evidence type="ECO:0000269" key="3">
    <source>
    </source>
</evidence>
<evidence type="ECO:0000303" key="4">
    <source>
    </source>
</evidence>
<evidence type="ECO:0000305" key="5"/>
<evidence type="ECO:0000312" key="6">
    <source>
        <dbReference type="EMBL" id="BAM69115.1"/>
    </source>
</evidence>
<evidence type="ECO:0000312" key="7">
    <source>
        <dbReference type="EMBL" id="BAM69116.1"/>
    </source>
</evidence>
<evidence type="ECO:0000312" key="8">
    <source>
        <dbReference type="EMBL" id="BAM69117.1"/>
    </source>
</evidence>
<evidence type="ECO:0000312" key="9">
    <source>
        <dbReference type="EMBL" id="BAM69118.1"/>
    </source>
</evidence>
<evidence type="ECO:0000312" key="10">
    <source>
        <dbReference type="EMBL" id="BAM69119.1"/>
    </source>
</evidence>
<reference evidence="6 7 8 9 10" key="1">
    <citation type="journal article" date="2013" name="Infect. Genet. Evol.">
        <title>Analysis of salivary gland transcripts of the sand fly Lutzomyia ayacuchensis, a vector of Andean-type cutaneous leishmaniasis.</title>
        <authorList>
            <person name="Kato H."/>
            <person name="Jochim R.C."/>
            <person name="Gomez E.A."/>
            <person name="Uezato H."/>
            <person name="Mimori T."/>
            <person name="Korenaga M."/>
            <person name="Sakurai T."/>
            <person name="Katakura K."/>
            <person name="Valenzuela J.G."/>
            <person name="Hashiguchi Y."/>
        </authorList>
    </citation>
    <scope>NUCLEOTIDE SEQUENCE [LARGE SCALE MRNA]</scope>
    <scope>TISSUE SPECIFICITY</scope>
    <source>
        <tissue evidence="7">Salivary gland</tissue>
    </source>
</reference>
<reference evidence="5" key="2">
    <citation type="journal article" date="2022" name="Acta Trop.">
        <title>Ayaconin, a novel inhibitor of the plasma contact system from the sand fly Lutzomyia ayacuchensis, a vector of Andean-type cutaneous leishmaniasis.</title>
        <authorList>
            <person name="Kawahori S."/>
            <person name="Seki C."/>
            <person name="Mizushima D."/>
            <person name="Tabbabi A."/>
            <person name="Yamamoto D.S."/>
            <person name="Kato H."/>
        </authorList>
    </citation>
    <scope>FUNCTION</scope>
    <scope>INTERACTION WITH HUMAN F12</scope>
    <scope>TISSUE SPECIFICITY</scope>
</reference>
<protein>
    <recommendedName>
        <fullName evidence="4">Ayaconin</fullName>
    </recommendedName>
    <alternativeName>
        <fullName evidence="4">LayS37</fullName>
    </alternativeName>
</protein>
<feature type="signal peptide" evidence="1">
    <location>
        <begin position="1"/>
        <end position="22"/>
    </location>
</feature>
<feature type="chain" id="PRO_5007685127" description="Ayaconin" evidence="1">
    <location>
        <begin position="23"/>
        <end position="143"/>
    </location>
</feature>
<feature type="sequence conflict" description="In Ref. 1; BAM69117." evidence="5" ref="1">
    <original>V</original>
    <variation>A</variation>
    <location>
        <position position="9"/>
    </location>
</feature>
<feature type="sequence conflict" description="In Ref. 1; BAM69115/BAM69117." evidence="5" ref="1">
    <original>V</original>
    <variation>I</variation>
    <location>
        <position position="69"/>
    </location>
</feature>
<feature type="sequence conflict" description="In Ref. 1; BAM69117." evidence="5" ref="1">
    <original>A</original>
    <variation>T</variation>
    <location>
        <position position="92"/>
    </location>
</feature>
<feature type="sequence conflict" description="In Ref. 1; BAM69115/BAM69117/BAM69118." evidence="5" ref="1">
    <original>S</original>
    <variation>T</variation>
    <location>
        <position position="135"/>
    </location>
</feature>
<organism>
    <name type="scientific">Lutzomyia ayacuchensis</name>
    <name type="common">Sand fly</name>
    <dbReference type="NCBI Taxonomy" id="252632"/>
    <lineage>
        <taxon>Eukaryota</taxon>
        <taxon>Metazoa</taxon>
        <taxon>Ecdysozoa</taxon>
        <taxon>Arthropoda</taxon>
        <taxon>Hexapoda</taxon>
        <taxon>Insecta</taxon>
        <taxon>Pterygota</taxon>
        <taxon>Neoptera</taxon>
        <taxon>Endopterygota</taxon>
        <taxon>Diptera</taxon>
        <taxon>Nematocera</taxon>
        <taxon>Psychodoidea</taxon>
        <taxon>Psychodidae</taxon>
        <taxon>Lutzomyia</taxon>
        <taxon>Helcocyrtomyia</taxon>
    </lineage>
</organism>
<keyword id="KW-1203">Blood coagulation cascade inhibiting toxin</keyword>
<keyword id="KW-1199">Hemostasis impairing toxin</keyword>
<keyword id="KW-0964">Secreted</keyword>
<keyword id="KW-0732">Signal</keyword>
<keyword id="KW-0800">Toxin</keyword>